<keyword id="KW-0472">Membrane</keyword>
<keyword id="KW-0597">Phosphoprotein</keyword>
<keyword id="KW-1185">Reference proteome</keyword>
<evidence type="ECO:0000250" key="1"/>
<evidence type="ECO:0000256" key="2">
    <source>
        <dbReference type="SAM" id="MobiDB-lite"/>
    </source>
</evidence>
<evidence type="ECO:0000305" key="3"/>
<organism>
    <name type="scientific">Zygosaccharomyces rouxii (strain ATCC 2623 / CBS 732 / NBRC 1130 / NCYC 568 / NRRL Y-229)</name>
    <dbReference type="NCBI Taxonomy" id="559307"/>
    <lineage>
        <taxon>Eukaryota</taxon>
        <taxon>Fungi</taxon>
        <taxon>Dikarya</taxon>
        <taxon>Ascomycota</taxon>
        <taxon>Saccharomycotina</taxon>
        <taxon>Saccharomycetes</taxon>
        <taxon>Saccharomycetales</taxon>
        <taxon>Saccharomycetaceae</taxon>
        <taxon>Zygosaccharomyces</taxon>
    </lineage>
</organism>
<accession>C5DUF5</accession>
<comment type="subcellular location">
    <subcellularLocation>
        <location evidence="1">Membrane raft</location>
        <topology evidence="1">Peripheral membrane protein</topology>
    </subcellularLocation>
    <text evidence="1">Localizes within detergent-insoluble glycolipid-enriched membranes.</text>
</comment>
<comment type="similarity">
    <text evidence="3">Belongs to the AIM3 family.</text>
</comment>
<feature type="chain" id="PRO_0000399608" description="Altered inheritance of mitochondria protein 3">
    <location>
        <begin position="1"/>
        <end position="590"/>
    </location>
</feature>
<feature type="region of interest" description="Disordered" evidence="2">
    <location>
        <begin position="1"/>
        <end position="571"/>
    </location>
</feature>
<feature type="compositionally biased region" description="Basic and acidic residues" evidence="2">
    <location>
        <begin position="45"/>
        <end position="56"/>
    </location>
</feature>
<feature type="compositionally biased region" description="Low complexity" evidence="2">
    <location>
        <begin position="108"/>
        <end position="148"/>
    </location>
</feature>
<feature type="compositionally biased region" description="Low complexity" evidence="2">
    <location>
        <begin position="157"/>
        <end position="218"/>
    </location>
</feature>
<feature type="compositionally biased region" description="Pro residues" evidence="2">
    <location>
        <begin position="236"/>
        <end position="273"/>
    </location>
</feature>
<feature type="compositionally biased region" description="Polar residues" evidence="2">
    <location>
        <begin position="275"/>
        <end position="285"/>
    </location>
</feature>
<feature type="compositionally biased region" description="Polar residues" evidence="2">
    <location>
        <begin position="295"/>
        <end position="314"/>
    </location>
</feature>
<feature type="compositionally biased region" description="Basic and acidic residues" evidence="2">
    <location>
        <begin position="342"/>
        <end position="354"/>
    </location>
</feature>
<feature type="compositionally biased region" description="Polar residues" evidence="2">
    <location>
        <begin position="358"/>
        <end position="368"/>
    </location>
</feature>
<feature type="compositionally biased region" description="Low complexity" evidence="2">
    <location>
        <begin position="383"/>
        <end position="393"/>
    </location>
</feature>
<feature type="compositionally biased region" description="Low complexity" evidence="2">
    <location>
        <begin position="400"/>
        <end position="411"/>
    </location>
</feature>
<feature type="compositionally biased region" description="Pro residues" evidence="2">
    <location>
        <begin position="413"/>
        <end position="422"/>
    </location>
</feature>
<feature type="compositionally biased region" description="Pro residues" evidence="2">
    <location>
        <begin position="432"/>
        <end position="441"/>
    </location>
</feature>
<feature type="compositionally biased region" description="Polar residues" evidence="2">
    <location>
        <begin position="497"/>
        <end position="514"/>
    </location>
</feature>
<feature type="compositionally biased region" description="Polar residues" evidence="2">
    <location>
        <begin position="521"/>
        <end position="531"/>
    </location>
</feature>
<feature type="compositionally biased region" description="Polar residues" evidence="2">
    <location>
        <begin position="555"/>
        <end position="568"/>
    </location>
</feature>
<gene>
    <name type="primary">AIM3</name>
    <name type="ordered locus">ZYRO0C16324g</name>
</gene>
<name>AIM3_ZYGRC</name>
<dbReference type="EMBL" id="CU928175">
    <property type="protein sequence ID" value="CAR27416.1"/>
    <property type="molecule type" value="Genomic_DNA"/>
</dbReference>
<dbReference type="RefSeq" id="XP_002496349.1">
    <property type="nucleotide sequence ID" value="XM_002496304.1"/>
</dbReference>
<dbReference type="SMR" id="C5DUF5"/>
<dbReference type="GeneID" id="8203578"/>
<dbReference type="KEGG" id="zro:ZYRO0C16324g"/>
<dbReference type="HOGENOM" id="CLU_462477_0_0_1"/>
<dbReference type="InParanoid" id="C5DUF5"/>
<dbReference type="Proteomes" id="UP000008536">
    <property type="component" value="Chromosome C"/>
</dbReference>
<dbReference type="GO" id="GO:0030479">
    <property type="term" value="C:actin cortical patch"/>
    <property type="evidence" value="ECO:0007669"/>
    <property type="project" value="InterPro"/>
</dbReference>
<dbReference type="GO" id="GO:0045121">
    <property type="term" value="C:membrane raft"/>
    <property type="evidence" value="ECO:0007669"/>
    <property type="project" value="UniProtKB-SubCell"/>
</dbReference>
<dbReference type="GO" id="GO:0051016">
    <property type="term" value="P:barbed-end actin filament capping"/>
    <property type="evidence" value="ECO:0007669"/>
    <property type="project" value="InterPro"/>
</dbReference>
<dbReference type="InterPro" id="IPR031370">
    <property type="entry name" value="Aim3"/>
</dbReference>
<dbReference type="Pfam" id="PF17096">
    <property type="entry name" value="AIM3"/>
    <property type="match status" value="1"/>
</dbReference>
<proteinExistence type="inferred from homology"/>
<protein>
    <recommendedName>
        <fullName>Altered inheritance of mitochondria protein 3</fullName>
    </recommendedName>
</protein>
<sequence>MSDFWEKNKGSITSGLKKTGKVGLSGTKYVAKTGYQAGKKNWGGNKKDKQNKKQGEEDVDDELDEEPAHHASYPPRVVDPSYFPPPPSRTNPSQNVAGEHMPRQTYPAQPSIQQPVYQQPVYQQSAYPAQVPQQAPQPAPQQAQYVIQQPPPPPRNPGYQQLPSQQAYEEPAQYSYQQPPPQSGFQQPPQAGYQPTQQTYQPTQQTYQPTQQTYQRPAQPVPPPPSNQSPQQVIQQPPPPPRSGYQQSPPPQVGYQQPPPPPRAGYQQSPPPQFDYQQPPVQQHAHSGPLPPSRPSDQYLTPIQTQSTVHSQTRPYDLTAPHVKQRLEMQSVDLTNLPPPPTHRDRSSPPKSRESSPAGQSQKVHSGSTPPPTYESSQKDIESSMSSSSVTPSTQPALASRPSSISSQSRSNVPPPMPPKPNEPGMVDVSSFPPPPRPRPTPSMERETALKAQDPSTGPTPRGRLAGSKPPPPPVKPKPRNLAAGSGSGSGSLGSGNHTPLASVDSISQELSKVQLKKTNSKYTQEPTSSKLPPPAVPRKNFTPDKQGTPLPPNKNASLKSPTDQQDVNPFERYLKSAVPAENDRLHKPM</sequence>
<reference key="1">
    <citation type="journal article" date="2009" name="Genome Res.">
        <title>Comparative genomics of protoploid Saccharomycetaceae.</title>
        <authorList>
            <consortium name="The Genolevures Consortium"/>
            <person name="Souciet J.-L."/>
            <person name="Dujon B."/>
            <person name="Gaillardin C."/>
            <person name="Johnston M."/>
            <person name="Baret P.V."/>
            <person name="Cliften P."/>
            <person name="Sherman D.J."/>
            <person name="Weissenbach J."/>
            <person name="Westhof E."/>
            <person name="Wincker P."/>
            <person name="Jubin C."/>
            <person name="Poulain J."/>
            <person name="Barbe V."/>
            <person name="Segurens B."/>
            <person name="Artiguenave F."/>
            <person name="Anthouard V."/>
            <person name="Vacherie B."/>
            <person name="Val M.-E."/>
            <person name="Fulton R.S."/>
            <person name="Minx P."/>
            <person name="Wilson R."/>
            <person name="Durrens P."/>
            <person name="Jean G."/>
            <person name="Marck C."/>
            <person name="Martin T."/>
            <person name="Nikolski M."/>
            <person name="Rolland T."/>
            <person name="Seret M.-L."/>
            <person name="Casaregola S."/>
            <person name="Despons L."/>
            <person name="Fairhead C."/>
            <person name="Fischer G."/>
            <person name="Lafontaine I."/>
            <person name="Leh V."/>
            <person name="Lemaire M."/>
            <person name="de Montigny J."/>
            <person name="Neuveglise C."/>
            <person name="Thierry A."/>
            <person name="Blanc-Lenfle I."/>
            <person name="Bleykasten C."/>
            <person name="Diffels J."/>
            <person name="Fritsch E."/>
            <person name="Frangeul L."/>
            <person name="Goeffon A."/>
            <person name="Jauniaux N."/>
            <person name="Kachouri-Lafond R."/>
            <person name="Payen C."/>
            <person name="Potier S."/>
            <person name="Pribylova L."/>
            <person name="Ozanne C."/>
            <person name="Richard G.-F."/>
            <person name="Sacerdot C."/>
            <person name="Straub M.-L."/>
            <person name="Talla E."/>
        </authorList>
    </citation>
    <scope>NUCLEOTIDE SEQUENCE [LARGE SCALE GENOMIC DNA]</scope>
    <source>
        <strain>ATCC 2623 / CBS 732 / BCRC 21506 / NBRC 1130 / NCYC 568 / NRRL Y-229</strain>
    </source>
</reference>